<keyword id="KW-0804">Transcription</keyword>
<keyword id="KW-0889">Transcription antitermination</keyword>
<keyword id="KW-0805">Transcription regulation</keyword>
<keyword id="KW-0806">Transcription termination</keyword>
<reference key="1">
    <citation type="journal article" date="1994" name="FEMS Microbiol. Lett.">
        <title>The nusG gene of Streptomyces griseus: cloning of the gene and analysis of the A-factor binding properties of the gene product.</title>
        <authorList>
            <person name="Kuberski S."/>
            <person name="Kasberg T."/>
            <person name="Distler J."/>
        </authorList>
    </citation>
    <scope>NUCLEOTIDE SEQUENCE [GENOMIC DNA]</scope>
    <source>
        <strain>N2-3-11</strain>
    </source>
</reference>
<reference key="2">
    <citation type="journal article" date="1994" name="Biochim. Biophys. Acta">
        <title>Organization and nucleotide sequence of the secE-nusG region of Streptomyces griseus.</title>
        <authorList>
            <person name="Miyake K."/>
            <person name="Onaka H."/>
            <person name="Horinouchi S."/>
            <person name="Beppu T."/>
        </authorList>
    </citation>
    <scope>NUCLEOTIDE SEQUENCE [GENOMIC DNA]</scope>
    <source>
        <strain>IFO 13350 / CBS 651.72</strain>
    </source>
</reference>
<evidence type="ECO:0000255" key="1">
    <source>
        <dbReference type="HAMAP-Rule" id="MF_00948"/>
    </source>
</evidence>
<evidence type="ECO:0000256" key="2">
    <source>
        <dbReference type="SAM" id="MobiDB-lite"/>
    </source>
</evidence>
<evidence type="ECO:0000305" key="3"/>
<organism>
    <name type="scientific">Streptomyces griseus</name>
    <dbReference type="NCBI Taxonomy" id="1911"/>
    <lineage>
        <taxon>Bacteria</taxon>
        <taxon>Bacillati</taxon>
        <taxon>Actinomycetota</taxon>
        <taxon>Actinomycetes</taxon>
        <taxon>Kitasatosporales</taxon>
        <taxon>Streptomycetaceae</taxon>
        <taxon>Streptomyces</taxon>
    </lineage>
</organism>
<feature type="chain" id="PRO_0000113958" description="Transcription termination/antitermination protein NusG">
    <location>
        <begin position="1"/>
        <end position="294"/>
    </location>
</feature>
<feature type="region of interest" description="Disordered" evidence="2">
    <location>
        <begin position="1"/>
        <end position="91"/>
    </location>
</feature>
<feature type="compositionally biased region" description="Acidic residues" evidence="2">
    <location>
        <begin position="25"/>
        <end position="39"/>
    </location>
</feature>
<feature type="compositionally biased region" description="Low complexity" evidence="2">
    <location>
        <begin position="40"/>
        <end position="53"/>
    </location>
</feature>
<feature type="compositionally biased region" description="Acidic residues" evidence="2">
    <location>
        <begin position="59"/>
        <end position="85"/>
    </location>
</feature>
<feature type="sequence conflict" description="In Ref. 2; BAA04281." evidence="3" ref="2">
    <original>AEPAA</original>
    <variation>RAGRR</variation>
    <location>
        <begin position="84"/>
        <end position="88"/>
    </location>
</feature>
<feature type="sequence conflict" description="In Ref. 2; BAA04281." evidence="3" ref="2">
    <original>EL</original>
    <variation>DV</variation>
    <location>
        <begin position="285"/>
        <end position="286"/>
    </location>
</feature>
<comment type="function">
    <text evidence="1">Participates in transcription elongation, termination and antitermination.</text>
</comment>
<comment type="similarity">
    <text evidence="1">Belongs to the NusG family.</text>
</comment>
<accession>P36260</accession>
<dbReference type="EMBL" id="X72787">
    <property type="protein sequence ID" value="CAA51296.1"/>
    <property type="molecule type" value="Genomic_DNA"/>
</dbReference>
<dbReference type="EMBL" id="D17464">
    <property type="protein sequence ID" value="BAA04281.1"/>
    <property type="molecule type" value="Genomic_DNA"/>
</dbReference>
<dbReference type="PIR" id="S32234">
    <property type="entry name" value="S32234"/>
</dbReference>
<dbReference type="PIR" id="S41061">
    <property type="entry name" value="S41061"/>
</dbReference>
<dbReference type="RefSeq" id="WP_003967001.1">
    <property type="nucleotide sequence ID" value="NZ_UAVD01000027.1"/>
</dbReference>
<dbReference type="SMR" id="P36260"/>
<dbReference type="STRING" id="1911.GCA_001715295_02337"/>
<dbReference type="OMA" id="EWYVIHT"/>
<dbReference type="OrthoDB" id="9809075at2"/>
<dbReference type="GO" id="GO:0005829">
    <property type="term" value="C:cytosol"/>
    <property type="evidence" value="ECO:0007669"/>
    <property type="project" value="TreeGrafter"/>
</dbReference>
<dbReference type="GO" id="GO:0006353">
    <property type="term" value="P:DNA-templated transcription termination"/>
    <property type="evidence" value="ECO:0007669"/>
    <property type="project" value="UniProtKB-UniRule"/>
</dbReference>
<dbReference type="GO" id="GO:0032784">
    <property type="term" value="P:regulation of DNA-templated transcription elongation"/>
    <property type="evidence" value="ECO:0007669"/>
    <property type="project" value="InterPro"/>
</dbReference>
<dbReference type="GO" id="GO:0031564">
    <property type="term" value="P:transcription antitermination"/>
    <property type="evidence" value="ECO:0007669"/>
    <property type="project" value="UniProtKB-UniRule"/>
</dbReference>
<dbReference type="GO" id="GO:0140673">
    <property type="term" value="P:transcription elongation-coupled chromatin remodeling"/>
    <property type="evidence" value="ECO:0007669"/>
    <property type="project" value="InterPro"/>
</dbReference>
<dbReference type="CDD" id="cd06091">
    <property type="entry name" value="KOW_NusG"/>
    <property type="match status" value="1"/>
</dbReference>
<dbReference type="CDD" id="cd09891">
    <property type="entry name" value="NGN_Bact_1"/>
    <property type="match status" value="1"/>
</dbReference>
<dbReference type="FunFam" id="2.30.30.30:FF:000002">
    <property type="entry name" value="Transcription termination/antitermination factor NusG"/>
    <property type="match status" value="1"/>
</dbReference>
<dbReference type="FunFam" id="3.30.70.940:FF:000002">
    <property type="entry name" value="Transcription termination/antitermination protein NusG"/>
    <property type="match status" value="1"/>
</dbReference>
<dbReference type="Gene3D" id="2.30.30.30">
    <property type="match status" value="1"/>
</dbReference>
<dbReference type="Gene3D" id="3.30.70.940">
    <property type="entry name" value="NusG, N-terminal domain"/>
    <property type="match status" value="1"/>
</dbReference>
<dbReference type="HAMAP" id="MF_00948">
    <property type="entry name" value="NusG"/>
    <property type="match status" value="1"/>
</dbReference>
<dbReference type="InterPro" id="IPR005824">
    <property type="entry name" value="KOW"/>
</dbReference>
<dbReference type="InterPro" id="IPR047050">
    <property type="entry name" value="NGN"/>
</dbReference>
<dbReference type="InterPro" id="IPR006645">
    <property type="entry name" value="NGN-like_dom"/>
</dbReference>
<dbReference type="InterPro" id="IPR036735">
    <property type="entry name" value="NGN_dom_sf"/>
</dbReference>
<dbReference type="InterPro" id="IPR043425">
    <property type="entry name" value="NusG-like"/>
</dbReference>
<dbReference type="InterPro" id="IPR014722">
    <property type="entry name" value="Rib_uL2_dom2"/>
</dbReference>
<dbReference type="InterPro" id="IPR001062">
    <property type="entry name" value="Transcrpt_antiterm_NusG"/>
</dbReference>
<dbReference type="InterPro" id="IPR015869">
    <property type="entry name" value="Transcrpt_antiterm_NusG_bac_CS"/>
</dbReference>
<dbReference type="InterPro" id="IPR008991">
    <property type="entry name" value="Translation_prot_SH3-like_sf"/>
</dbReference>
<dbReference type="NCBIfam" id="TIGR00922">
    <property type="entry name" value="nusG"/>
    <property type="match status" value="1"/>
</dbReference>
<dbReference type="PANTHER" id="PTHR30265">
    <property type="entry name" value="RHO-INTERACTING TRANSCRIPTION TERMINATION FACTOR NUSG"/>
    <property type="match status" value="1"/>
</dbReference>
<dbReference type="PANTHER" id="PTHR30265:SF2">
    <property type="entry name" value="TRANSCRIPTION TERMINATION_ANTITERMINATION PROTEIN NUSG"/>
    <property type="match status" value="1"/>
</dbReference>
<dbReference type="Pfam" id="PF02357">
    <property type="entry name" value="NusG"/>
    <property type="match status" value="1"/>
</dbReference>
<dbReference type="PRINTS" id="PR00338">
    <property type="entry name" value="NUSGTNSCPFCT"/>
</dbReference>
<dbReference type="SMART" id="SM00739">
    <property type="entry name" value="KOW"/>
    <property type="match status" value="1"/>
</dbReference>
<dbReference type="SMART" id="SM00738">
    <property type="entry name" value="NGN"/>
    <property type="match status" value="1"/>
</dbReference>
<dbReference type="SUPFAM" id="SSF82679">
    <property type="entry name" value="N-utilization substance G protein NusG, N-terminal domain"/>
    <property type="match status" value="1"/>
</dbReference>
<dbReference type="SUPFAM" id="SSF50104">
    <property type="entry name" value="Translation proteins SH3-like domain"/>
    <property type="match status" value="1"/>
</dbReference>
<dbReference type="PROSITE" id="PS01014">
    <property type="entry name" value="NUSG"/>
    <property type="match status" value="1"/>
</dbReference>
<name>NUSG_STRGR</name>
<sequence>MSDPNLNDAVEPEAGASESAKDELDIVEAADSVDPDQAEAADLAAGEPAERAAVNVAGDDSDEDDAAAEEAVEADDESADEEEAEPAAPVDPVAALRDELRTLPGEWYVIHTYAGYEKRVKANLEQRAVSLNVEEFIYQAEVPEEEIVQIKNGERKNVRQNKLPGYVLVRMDLTNESWGVVRNTPGVTGFVGNAYDPYPLTLDEIVKMLAPEAEEKAAREAAEAEGKPAPARKVEVQVLDFEVGDSVTVTDGPFATLQATINEINADSKKVKGLVEIFGRETPVELSFDQIQKN</sequence>
<proteinExistence type="inferred from homology"/>
<gene>
    <name evidence="1" type="primary">nusG</name>
</gene>
<protein>
    <recommendedName>
        <fullName evidence="1">Transcription termination/antitermination protein NusG</fullName>
    </recommendedName>
</protein>